<evidence type="ECO:0000250" key="1">
    <source>
        <dbReference type="UniProtKB" id="Q09924"/>
    </source>
</evidence>
<evidence type="ECO:0000250" key="2">
    <source>
        <dbReference type="UniProtKB" id="Q9UI10"/>
    </source>
</evidence>
<evidence type="ECO:0000256" key="3">
    <source>
        <dbReference type="SAM" id="MobiDB-lite"/>
    </source>
</evidence>
<evidence type="ECO:0000305" key="4"/>
<gene>
    <name type="primary">eif2b4</name>
    <name type="ORF">DDB_G0290759</name>
</gene>
<proteinExistence type="inferred from homology"/>
<accession>Q54FM3</accession>
<dbReference type="EMBL" id="AAFI02000170">
    <property type="protein sequence ID" value="EAL62064.1"/>
    <property type="molecule type" value="Genomic_DNA"/>
</dbReference>
<dbReference type="RefSeq" id="XP_635568.1">
    <property type="nucleotide sequence ID" value="XM_630476.1"/>
</dbReference>
<dbReference type="SMR" id="Q54FM3"/>
<dbReference type="FunCoup" id="Q54FM3">
    <property type="interactions" value="796"/>
</dbReference>
<dbReference type="STRING" id="44689.Q54FM3"/>
<dbReference type="GlyGen" id="Q54FM3">
    <property type="glycosylation" value="4 sites"/>
</dbReference>
<dbReference type="PaxDb" id="44689-DDB0232421"/>
<dbReference type="EnsemblProtists" id="EAL62064">
    <property type="protein sequence ID" value="EAL62064"/>
    <property type="gene ID" value="DDB_G0290759"/>
</dbReference>
<dbReference type="GeneID" id="8627814"/>
<dbReference type="KEGG" id="ddi:DDB_G0290759"/>
<dbReference type="dictyBase" id="DDB_G0290759">
    <property type="gene designation" value="eif2b4"/>
</dbReference>
<dbReference type="VEuPathDB" id="AmoebaDB:DDB_G0290759"/>
<dbReference type="eggNOG" id="KOG1467">
    <property type="taxonomic scope" value="Eukaryota"/>
</dbReference>
<dbReference type="HOGENOM" id="CLU_016218_3_2_1"/>
<dbReference type="InParanoid" id="Q54FM3"/>
<dbReference type="OMA" id="YAEGIIC"/>
<dbReference type="PhylomeDB" id="Q54FM3"/>
<dbReference type="Reactome" id="R-DDI-72731">
    <property type="pathway name" value="Recycling of eIF2:GDP"/>
</dbReference>
<dbReference type="PRO" id="PR:Q54FM3"/>
<dbReference type="Proteomes" id="UP000002195">
    <property type="component" value="Chromosome 5"/>
</dbReference>
<dbReference type="GO" id="GO:0005829">
    <property type="term" value="C:cytosol"/>
    <property type="evidence" value="ECO:0007669"/>
    <property type="project" value="UniProtKB-SubCell"/>
</dbReference>
<dbReference type="GO" id="GO:0005851">
    <property type="term" value="C:eukaryotic translation initiation factor 2B complex"/>
    <property type="evidence" value="ECO:0000250"/>
    <property type="project" value="UniProtKB"/>
</dbReference>
<dbReference type="GO" id="GO:0005085">
    <property type="term" value="F:guanyl-nucleotide exchange factor activity"/>
    <property type="evidence" value="ECO:0000250"/>
    <property type="project" value="UniProtKB"/>
</dbReference>
<dbReference type="GO" id="GO:0003743">
    <property type="term" value="F:translation initiation factor activity"/>
    <property type="evidence" value="ECO:0000250"/>
    <property type="project" value="dictyBase"/>
</dbReference>
<dbReference type="GO" id="GO:0002183">
    <property type="term" value="P:cytoplasmic translational initiation"/>
    <property type="evidence" value="ECO:0000250"/>
    <property type="project" value="UniProtKB"/>
</dbReference>
<dbReference type="GO" id="GO:0006413">
    <property type="term" value="P:translational initiation"/>
    <property type="evidence" value="ECO:0000250"/>
    <property type="project" value="dictyBase"/>
</dbReference>
<dbReference type="FunFam" id="3.40.50.10470:FF:000002">
    <property type="entry name" value="Probable translation initiation factor eIF-2B subunit delta"/>
    <property type="match status" value="1"/>
</dbReference>
<dbReference type="Gene3D" id="3.40.50.10470">
    <property type="entry name" value="Translation initiation factor eif-2b, domain 2"/>
    <property type="match status" value="1"/>
</dbReference>
<dbReference type="InterPro" id="IPR000649">
    <property type="entry name" value="IF-2B-related"/>
</dbReference>
<dbReference type="InterPro" id="IPR042529">
    <property type="entry name" value="IF_2B-like_C"/>
</dbReference>
<dbReference type="InterPro" id="IPR037171">
    <property type="entry name" value="NagB/RpiA_transferase-like"/>
</dbReference>
<dbReference type="PANTHER" id="PTHR10233">
    <property type="entry name" value="TRANSLATION INITIATION FACTOR EIF-2B"/>
    <property type="match status" value="1"/>
</dbReference>
<dbReference type="PANTHER" id="PTHR10233:SF14">
    <property type="entry name" value="TRANSLATION INITIATION FACTOR EIF-2B SUBUNIT DELTA"/>
    <property type="match status" value="1"/>
</dbReference>
<dbReference type="Pfam" id="PF01008">
    <property type="entry name" value="IF-2B"/>
    <property type="match status" value="1"/>
</dbReference>
<dbReference type="SUPFAM" id="SSF100950">
    <property type="entry name" value="NagB/RpiA/CoA transferase-like"/>
    <property type="match status" value="1"/>
</dbReference>
<comment type="function">
    <text evidence="2">Acts as a component of the translation initiation factor 2B (eIF2B) complex, which catalyzes the exchange of GDP for GTP on eukaryotic initiation factor 2 (eIF2) gamma subunit. Its guanine nucleotide exchange factor activity is repressed when bound to eIF2 complex phosphorylated on the alpha subunit, thereby limiting the amount of methionyl-initiator methionine tRNA available to the ribosome and consequently global translation is repressed.</text>
</comment>
<comment type="subunit">
    <text evidence="2">Component of the translation initiation factor 2B (eIF2B) complex which is a heterodecamer of two sets of five different subunits: alpha, beta, gamma, delta and epsilon. Subunits alpha, beta and delta comprise a regulatory subcomplex and subunits epsilon and gamma comprise a catalytic subcomplex. Within the complex, the hexameric regulatory complex resides at the center, with the two heterodimeric catalytic subcomplexes bound on opposite sides.</text>
</comment>
<comment type="subcellular location">
    <subcellularLocation>
        <location evidence="1">Cytoplasm</location>
        <location evidence="1">Cytosol</location>
    </subcellularLocation>
</comment>
<comment type="similarity">
    <text evidence="4">Belongs to the eIF-2B alpha/beta/delta subunits family.</text>
</comment>
<feature type="chain" id="PRO_0000329968" description="Translation initiation factor eIF2B subunit delta">
    <location>
        <begin position="1"/>
        <end position="619"/>
    </location>
</feature>
<feature type="region of interest" description="Disordered" evidence="3">
    <location>
        <begin position="21"/>
        <end position="251"/>
    </location>
</feature>
<feature type="compositionally biased region" description="Basic and acidic residues" evidence="3">
    <location>
        <begin position="21"/>
        <end position="32"/>
    </location>
</feature>
<feature type="compositionally biased region" description="Low complexity" evidence="3">
    <location>
        <begin position="42"/>
        <end position="56"/>
    </location>
</feature>
<feature type="compositionally biased region" description="Polar residues" evidence="3">
    <location>
        <begin position="57"/>
        <end position="84"/>
    </location>
</feature>
<feature type="compositionally biased region" description="Low complexity" evidence="3">
    <location>
        <begin position="85"/>
        <end position="98"/>
    </location>
</feature>
<feature type="compositionally biased region" description="Polar residues" evidence="3">
    <location>
        <begin position="99"/>
        <end position="125"/>
    </location>
</feature>
<feature type="compositionally biased region" description="Low complexity" evidence="3">
    <location>
        <begin position="136"/>
        <end position="199"/>
    </location>
</feature>
<feature type="compositionally biased region" description="Basic and acidic residues" evidence="3">
    <location>
        <begin position="200"/>
        <end position="244"/>
    </location>
</feature>
<organism>
    <name type="scientific">Dictyostelium discoideum</name>
    <name type="common">Social amoeba</name>
    <dbReference type="NCBI Taxonomy" id="44689"/>
    <lineage>
        <taxon>Eukaryota</taxon>
        <taxon>Amoebozoa</taxon>
        <taxon>Evosea</taxon>
        <taxon>Eumycetozoa</taxon>
        <taxon>Dictyostelia</taxon>
        <taxon>Dictyosteliales</taxon>
        <taxon>Dictyosteliaceae</taxon>
        <taxon>Dictyostelium</taxon>
    </lineage>
</organism>
<sequence length="619" mass="69244">MSSFGKNSSYRDTGASLKELGDYLDSKQEGKPTHQKTIGFDTNTSPVSIPTIISPPLGSNNSNYGKSPKSSYDNKQTSPLLSASNNRKNNNNNNNNNNATSPKDSSIIGKNNVNSDLSKVSSSLNELKFEKQPIGSTSSTPTSTPSSTPSSSTPSSTPSTPNTNSQQQQQQQQQQKKQQQQQPKQPQQPKQQSKQQATQQDKKDKEQQQQQQDKQDKESNEIKGSKEVAKDGQHGVKQFDDPKQRGKITKKKIIKVGESSRSVQLFNHLPQYNSEFSMGVSVSTDEPNEKYPIHPDIISLGLKYAEFKIAGSNARAIAMMTAFIQIFKDYVAAPDKVYSRELDSLLKRNIQFLVDCRPISISMGNSINYVKHKLSLTNNMSHEGARDYLIKSINEFIERIQMADNAIVKHGCSKINDGDVILTYASSHVVELIIQQAIQDKKKFRLIIVDSRPKHEGRELLHRLVLHGVKITYIMLHAVSYIMKEVTKVFVGAYSVLSNGNLISRSGTSLVASMAKFYNVPFIVCCETYKFTERVQLDSICFNQIGNPQDLVQNLGEKEGSKSLLENWESYSTLKLLNLMYDLTPIELIDMVITEFGMLPPTSIPVVLREYRKEVISIN</sequence>
<protein>
    <recommendedName>
        <fullName>Translation initiation factor eIF2B subunit delta</fullName>
    </recommendedName>
    <alternativeName>
        <fullName>eIF2B GDP-GTP exchange factor subunit delta</fullName>
    </alternativeName>
</protein>
<name>EI2BD_DICDI</name>
<reference key="1">
    <citation type="journal article" date="2005" name="Nature">
        <title>The genome of the social amoeba Dictyostelium discoideum.</title>
        <authorList>
            <person name="Eichinger L."/>
            <person name="Pachebat J.A."/>
            <person name="Gloeckner G."/>
            <person name="Rajandream M.A."/>
            <person name="Sucgang R."/>
            <person name="Berriman M."/>
            <person name="Song J."/>
            <person name="Olsen R."/>
            <person name="Szafranski K."/>
            <person name="Xu Q."/>
            <person name="Tunggal B."/>
            <person name="Kummerfeld S."/>
            <person name="Madera M."/>
            <person name="Konfortov B.A."/>
            <person name="Rivero F."/>
            <person name="Bankier A.T."/>
            <person name="Lehmann R."/>
            <person name="Hamlin N."/>
            <person name="Davies R."/>
            <person name="Gaudet P."/>
            <person name="Fey P."/>
            <person name="Pilcher K."/>
            <person name="Chen G."/>
            <person name="Saunders D."/>
            <person name="Sodergren E.J."/>
            <person name="Davis P."/>
            <person name="Kerhornou A."/>
            <person name="Nie X."/>
            <person name="Hall N."/>
            <person name="Anjard C."/>
            <person name="Hemphill L."/>
            <person name="Bason N."/>
            <person name="Farbrother P."/>
            <person name="Desany B."/>
            <person name="Just E."/>
            <person name="Morio T."/>
            <person name="Rost R."/>
            <person name="Churcher C.M."/>
            <person name="Cooper J."/>
            <person name="Haydock S."/>
            <person name="van Driessche N."/>
            <person name="Cronin A."/>
            <person name="Goodhead I."/>
            <person name="Muzny D.M."/>
            <person name="Mourier T."/>
            <person name="Pain A."/>
            <person name="Lu M."/>
            <person name="Harper D."/>
            <person name="Lindsay R."/>
            <person name="Hauser H."/>
            <person name="James K.D."/>
            <person name="Quiles M."/>
            <person name="Madan Babu M."/>
            <person name="Saito T."/>
            <person name="Buchrieser C."/>
            <person name="Wardroper A."/>
            <person name="Felder M."/>
            <person name="Thangavelu M."/>
            <person name="Johnson D."/>
            <person name="Knights A."/>
            <person name="Loulseged H."/>
            <person name="Mungall K.L."/>
            <person name="Oliver K."/>
            <person name="Price C."/>
            <person name="Quail M.A."/>
            <person name="Urushihara H."/>
            <person name="Hernandez J."/>
            <person name="Rabbinowitsch E."/>
            <person name="Steffen D."/>
            <person name="Sanders M."/>
            <person name="Ma J."/>
            <person name="Kohara Y."/>
            <person name="Sharp S."/>
            <person name="Simmonds M.N."/>
            <person name="Spiegler S."/>
            <person name="Tivey A."/>
            <person name="Sugano S."/>
            <person name="White B."/>
            <person name="Walker D."/>
            <person name="Woodward J.R."/>
            <person name="Winckler T."/>
            <person name="Tanaka Y."/>
            <person name="Shaulsky G."/>
            <person name="Schleicher M."/>
            <person name="Weinstock G.M."/>
            <person name="Rosenthal A."/>
            <person name="Cox E.C."/>
            <person name="Chisholm R.L."/>
            <person name="Gibbs R.A."/>
            <person name="Loomis W.F."/>
            <person name="Platzer M."/>
            <person name="Kay R.R."/>
            <person name="Williams J.G."/>
            <person name="Dear P.H."/>
            <person name="Noegel A.A."/>
            <person name="Barrell B.G."/>
            <person name="Kuspa A."/>
        </authorList>
    </citation>
    <scope>NUCLEOTIDE SEQUENCE [LARGE SCALE GENOMIC DNA]</scope>
    <source>
        <strain>AX4</strain>
    </source>
</reference>
<keyword id="KW-0963">Cytoplasm</keyword>
<keyword id="KW-0396">Initiation factor</keyword>
<keyword id="KW-0648">Protein biosynthesis</keyword>
<keyword id="KW-1185">Reference proteome</keyword>